<evidence type="ECO:0000250" key="1"/>
<evidence type="ECO:0000255" key="2">
    <source>
        <dbReference type="HAMAP-Rule" id="MF_04008"/>
    </source>
</evidence>
<evidence type="ECO:0000256" key="3">
    <source>
        <dbReference type="SAM" id="MobiDB-lite"/>
    </source>
</evidence>
<evidence type="ECO:0000269" key="4">
    <source>
    </source>
</evidence>
<evidence type="ECO:0000269" key="5">
    <source>
    </source>
</evidence>
<evidence type="ECO:0000269" key="6">
    <source>
    </source>
</evidence>
<evidence type="ECO:0000305" key="7"/>
<evidence type="ECO:0007829" key="8">
    <source>
        <dbReference type="PDB" id="1FL1"/>
    </source>
</evidence>
<evidence type="ECO:0007829" key="9">
    <source>
        <dbReference type="PDB" id="2PBK"/>
    </source>
</evidence>
<evidence type="ECO:0007829" key="10">
    <source>
        <dbReference type="PDB" id="4P3H"/>
    </source>
</evidence>
<organism>
    <name type="scientific">Human herpesvirus 8 type P (isolate GK18)</name>
    <name type="common">HHV-8</name>
    <name type="synonym">Kaposi's sarcoma-associated herpesvirus</name>
    <dbReference type="NCBI Taxonomy" id="868565"/>
    <lineage>
        <taxon>Viruses</taxon>
        <taxon>Duplodnaviria</taxon>
        <taxon>Heunggongvirae</taxon>
        <taxon>Peploviricota</taxon>
        <taxon>Herviviricetes</taxon>
        <taxon>Herpesvirales</taxon>
        <taxon>Orthoherpesviridae</taxon>
        <taxon>Gammaherpesvirinae</taxon>
        <taxon>Rhadinovirus</taxon>
        <taxon>Rhadinovirus humangamma8</taxon>
        <taxon>Human herpesvirus 8</taxon>
    </lineage>
</organism>
<gene>
    <name type="primary">ORF17</name>
</gene>
<sequence>MAQGLYVGGFVDVVSCPKLEQELYLDPDQVTDYLPVTEPLPITIEHLPETEVGWTLGLFQVSHGIFCTGAITSPAFLELASRLADTSHVARAPVKNLPKEPLLEILHTWLPGLSLSSIHPRELSQTPSGPVFQHVSLCALGRRRGTVAVYGHDAEWVVSRFSSVSKSERAHILQHVSSCRLEDLSTPNFVSPLETLMAKAIDASFIRDRLDLLKTDRGVASILSPAYLKASQFPVGIQAVTPPRPAMNSSGQEDIISIPKSAFLSMLQSSIDGMKTTAAKMSHTLSGPGLMGCGGQMFPTDHHLPSYVSNPAPPYGYAYKNPYDPWYYSPQLPGYRTGKRKRGAEDDEGHLFPGEEPAYHKDILSMSKNIAEIQSELKEMKLNGWHAGPPPSSSAAAAAVDPHYRPHANSAAPCQFPTMKEHGGTYVHPPIYVQAPHGQFQQAAPILFAQPHVSHPPVSTGLAVVGAPPAEPTPASSTQSIQQQAPETTHTPCAAVEKDAPTPNPTSNRVEASSRSSPKSKIRKMFCEELLNKQ</sequence>
<name>SCAF_HHV8P</name>
<accession>Q2HRB6</accession>
<accession>D0UZM9</accession>
<accession>O36607</accession>
<accession>Q2HRB5</accession>
<proteinExistence type="evidence at protein level"/>
<protein>
    <recommendedName>
        <fullName evidence="2">Capsid scaffolding protein</fullName>
    </recommendedName>
    <alternativeName>
        <fullName>Capsid protein P40</fullName>
    </alternativeName>
    <alternativeName>
        <fullName evidence="2">Protease precursor</fullName>
        <shortName evidence="2">pPR</shortName>
    </alternativeName>
    <component>
        <recommendedName>
            <fullName evidence="2">Assemblin</fullName>
            <ecNumber evidence="2 6">3.4.21.97</ecNumber>
        </recommendedName>
        <alternativeName>
            <fullName evidence="2">Protease</fullName>
            <shortName evidence="2">Pr</shortName>
        </alternativeName>
    </component>
    <component>
        <recommendedName>
            <fullName evidence="2">Assembly protein</fullName>
            <shortName evidence="2">AP</shortName>
        </recommendedName>
        <alternativeName>
            <fullName evidence="2">Capsid assembly protein</fullName>
        </alternativeName>
    </component>
</protein>
<organismHost>
    <name type="scientific">Homo sapiens</name>
    <name type="common">Human</name>
    <dbReference type="NCBI Taxonomy" id="9606"/>
</organismHost>
<keyword id="KW-0002">3D-structure</keyword>
<keyword id="KW-0877">Alternative promoter usage</keyword>
<keyword id="KW-1035">Host cytoplasm</keyword>
<keyword id="KW-1048">Host nucleus</keyword>
<keyword id="KW-0378">Hydrolase</keyword>
<keyword id="KW-0597">Phosphoprotein</keyword>
<keyword id="KW-0645">Protease</keyword>
<keyword id="KW-1185">Reference proteome</keyword>
<keyword id="KW-0720">Serine protease</keyword>
<keyword id="KW-0118">Viral capsid assembly</keyword>
<keyword id="KW-1188">Viral release from host cell</keyword>
<reference key="1">
    <citation type="journal article" date="1997" name="J. Virol.">
        <title>The protease and the assembly protein of Kaposi's sarcoma-associated herpesvirus (human herpesvirus 8).</title>
        <authorList>
            <person name="Unal A."/>
            <person name="Pray T.R."/>
            <person name="Lagunoff M."/>
            <person name="Pennington M.W."/>
            <person name="Ganem D."/>
            <person name="Craik C.S."/>
        </authorList>
    </citation>
    <scope>NUCLEOTIDE SEQUENCE [GENOMIC DNA]</scope>
    <scope>PROTEOLYTIC CLEAVAGE (CAPSID SCAFFOLDING PROTEIN)</scope>
    <scope>CATALYTIC ACTIVITY (ASSEMBLIN)</scope>
    <scope>INDUCTION (ASSEMBLY PROTEIND)</scope>
    <scope>MUTAGENESIS OF SER-114</scope>
</reference>
<reference key="2">
    <citation type="journal article" date="1999" name="J. Virol.">
        <title>Identification of a spliced gene from Kaposi's sarcoma-associated herpesvirus encoding a protein with similarities to latent membrane proteins 1 and 2A of Epstein-Barr virus.</title>
        <authorList>
            <person name="Glenn M."/>
            <person name="Rainbow L."/>
            <person name="Aurade F."/>
            <person name="Davison A."/>
            <person name="Schulz T.F."/>
        </authorList>
    </citation>
    <scope>NUCLEOTIDE SEQUENCE [LARGE SCALE GENOMIC DNA]</scope>
</reference>
<reference key="3">
    <citation type="journal article" date="2006" name="J. Gen. Virol.">
        <title>Kaposi's sarcoma-associated herpesvirus immune modulation: an overview.</title>
        <authorList>
            <person name="Rezaee S.A.R."/>
            <person name="Cunningham C."/>
            <person name="Davison A.J."/>
            <person name="Blackbourn D.J."/>
        </authorList>
    </citation>
    <scope>NUCLEOTIDE SEQUENCE [LARGE SCALE GENOMIC DNA]</scope>
</reference>
<reference key="4">
    <citation type="journal article" date="2017" name="J. Gen. Virol.">
        <title>Assemblins as maturational proteases in herpesviruses.</title>
        <authorList>
            <person name="Zuehlsdorf M."/>
            <person name="Hinrichs W."/>
        </authorList>
    </citation>
    <scope>REVIEW</scope>
</reference>
<reference evidence="8" key="5">
    <citation type="journal article" date="2000" name="Biochemistry">
        <title>Functional consequences of the Kaposi's sarcoma-associated herpesvirus protease structure: regulation of activity and dimerization by conserved structural elements.</title>
        <authorList>
            <person name="Reiling K.K."/>
            <person name="Pray T.R."/>
            <person name="Craik C.S."/>
            <person name="Stroud R.M."/>
        </authorList>
    </citation>
    <scope>X-RAY CRYSTALLOGRAPHY (2.20 ANGSTROMS) OF 1-230</scope>
    <scope>SUBUNIT (ASSEMBLIN)</scope>
</reference>
<reference evidence="9" key="6">
    <citation type="journal article" date="2007" name="J. Mol. Biol.">
        <title>Substrate modulation of enzyme activity in the herpesvirus protease family.</title>
        <authorList>
            <person name="Lazic A."/>
            <person name="Goetz D.H."/>
            <person name="Nomura A.M."/>
            <person name="Marnett A.B."/>
            <person name="Craik C.S."/>
        </authorList>
    </citation>
    <scope>X-RAY CRYSTALLOGRAPHY (1.73 ANGSTROMS) OF 3-230 IN COMPLEX WITH A HEXAPEPTIDE TRANSITION STATE ANALOG</scope>
    <scope>SUBUNIT (ASSEMBLIN)</scope>
</reference>
<reference key="7">
    <citation type="journal article" date="2014" name="Biochemistry">
        <title>Broad-spectrum allosteric inhibition of herpesvirus proteases.</title>
        <authorList>
            <person name="Gable J.E."/>
            <person name="Lee G.M."/>
            <person name="Jaishankar P."/>
            <person name="Hearn B.R."/>
            <person name="Waddling C.A."/>
            <person name="Renslo A.R."/>
            <person name="Craik C.S."/>
        </authorList>
    </citation>
    <scope>X-RAY CRYSTALLOGRAPHY (2.15 ANGSTROMS) OF 3-196</scope>
</reference>
<feature type="chain" id="PRO_0000423879" description="Capsid scaffolding protein">
    <location>
        <begin position="1"/>
        <end position="534"/>
    </location>
</feature>
<feature type="chain" id="PRO_0000435878" description="Assemblin" evidence="2">
    <location>
        <begin position="1"/>
        <end position="230"/>
    </location>
</feature>
<feature type="chain" id="PRO_0000435879" description="Assembly protein" evidence="2">
    <location>
        <begin position="231"/>
        <end position="534"/>
    </location>
</feature>
<feature type="region of interest" description="Interaction with pAP" evidence="2">
    <location>
        <begin position="253"/>
        <end position="272"/>
    </location>
</feature>
<feature type="region of interest" description="Disordered" evidence="3">
    <location>
        <begin position="337"/>
        <end position="356"/>
    </location>
</feature>
<feature type="region of interest" description="Disordered" evidence="3">
    <location>
        <begin position="466"/>
        <end position="524"/>
    </location>
</feature>
<feature type="region of interest" description="Interaction with major capsid protein" evidence="2">
    <location>
        <begin position="514"/>
        <end position="534"/>
    </location>
</feature>
<feature type="short sequence motif" description="Nuclear localization signal" evidence="1">
    <location>
        <begin position="336"/>
        <end position="342"/>
    </location>
</feature>
<feature type="compositionally biased region" description="Polar residues" evidence="3">
    <location>
        <begin position="479"/>
        <end position="491"/>
    </location>
</feature>
<feature type="active site" description="Charge relay system" evidence="2">
    <location>
        <position position="46"/>
    </location>
</feature>
<feature type="active site" description="Charge relay system" evidence="2">
    <location>
        <position position="114"/>
    </location>
</feature>
<feature type="active site" description="Charge relay system" evidence="2">
    <location>
        <position position="134"/>
    </location>
</feature>
<feature type="site" description="Cleavage; by assemblin; Release site" evidence="2">
    <location>
        <begin position="230"/>
        <end position="231"/>
    </location>
</feature>
<feature type="site" description="Cleavage; by assemblin; Maturation site" evidence="6">
    <location>
        <begin position="512"/>
        <end position="513"/>
    </location>
</feature>
<feature type="splice variant" id="VSP_053272" description="In isoform pAP." evidence="7">
    <location>
        <begin position="1"/>
        <end position="246"/>
    </location>
</feature>
<feature type="mutagenesis site" description="Reduced levels of autoproteolysis." evidence="6">
    <original>S</original>
    <variation>A</variation>
    <location>
        <position position="114"/>
    </location>
</feature>
<feature type="sequence conflict" description="In Ref. 1; AAC05223." evidence="7" ref="1">
    <original>A</original>
    <variation>V</variation>
    <location>
        <position position="226"/>
    </location>
</feature>
<feature type="sequence conflict" description="In Ref. 1; AAC05223." evidence="7" ref="1">
    <original>V</original>
    <variation>A</variation>
    <location>
        <position position="235"/>
    </location>
</feature>
<feature type="sequence conflict" description="In Ref. 1; AAC05223." evidence="7" ref="1">
    <original>V</original>
    <variation>L</variation>
    <location>
        <position position="510"/>
    </location>
</feature>
<feature type="sequence conflict" description="In Ref. 1; AAC05223." evidence="7" ref="1">
    <original>E</original>
    <variation>EL</variation>
    <location>
        <position position="529"/>
    </location>
</feature>
<feature type="strand" evidence="10">
    <location>
        <begin position="5"/>
        <end position="10"/>
    </location>
</feature>
<feature type="strand" evidence="10">
    <location>
        <begin position="12"/>
        <end position="16"/>
    </location>
</feature>
<feature type="strand" evidence="10">
    <location>
        <begin position="23"/>
        <end position="25"/>
    </location>
</feature>
<feature type="helix" evidence="10">
    <location>
        <begin position="27"/>
        <end position="29"/>
    </location>
</feature>
<feature type="helix" evidence="10">
    <location>
        <begin position="31"/>
        <end position="33"/>
    </location>
</feature>
<feature type="strand" evidence="10">
    <location>
        <begin position="41"/>
        <end position="44"/>
    </location>
</feature>
<feature type="helix" evidence="10">
    <location>
        <begin position="48"/>
        <end position="50"/>
    </location>
</feature>
<feature type="strand" evidence="10">
    <location>
        <begin position="53"/>
        <end position="61"/>
    </location>
</feature>
<feature type="strand" evidence="10">
    <location>
        <begin position="64"/>
        <end position="71"/>
    </location>
</feature>
<feature type="helix" evidence="10">
    <location>
        <begin position="74"/>
        <end position="86"/>
    </location>
</feature>
<feature type="helix" evidence="10">
    <location>
        <begin position="88"/>
        <end position="91"/>
    </location>
</feature>
<feature type="helix" evidence="10">
    <location>
        <begin position="101"/>
        <end position="109"/>
    </location>
</feature>
<feature type="strand" evidence="10">
    <location>
        <begin position="112"/>
        <end position="117"/>
    </location>
</feature>
<feature type="helix" evidence="10">
    <location>
        <begin position="121"/>
        <end position="124"/>
    </location>
</feature>
<feature type="strand" evidence="10">
    <location>
        <begin position="131"/>
        <end position="140"/>
    </location>
</feature>
<feature type="strand" evidence="10">
    <location>
        <begin position="143"/>
        <end position="145"/>
    </location>
</feature>
<feature type="strand" evidence="10">
    <location>
        <begin position="149"/>
        <end position="153"/>
    </location>
</feature>
<feature type="helix" evidence="10">
    <location>
        <begin position="154"/>
        <end position="158"/>
    </location>
</feature>
<feature type="helix" evidence="10">
    <location>
        <begin position="166"/>
        <end position="178"/>
    </location>
</feature>
<feature type="helix" evidence="9">
    <location>
        <begin position="181"/>
        <end position="183"/>
    </location>
</feature>
<feature type="helix" evidence="9">
    <location>
        <begin position="193"/>
        <end position="203"/>
    </location>
</feature>
<feature type="helix" evidence="9">
    <location>
        <begin position="209"/>
        <end position="219"/>
    </location>
</feature>
<comment type="function">
    <molecule>Capsid scaffolding protein</molecule>
    <text evidence="2">Acts as a scaffold protein by binding major capsid protein in the cytoplasm, inducing the nuclear localization of both proteins. Multimerizes in the nucleus such as major capsid protein forms the icosahedral T=16 capsid. Autocatalytic cleavage releases the assembly protein, and subsequently abolishes interaction with major capsid protein. Cleavages products are evicted from the capsid before or during DNA packaging.</text>
</comment>
<comment type="function">
    <molecule>Assemblin</molecule>
    <text evidence="2">Protease that plays an essential role in virion assembly within the nucleus. Catalyzes the cleavage of the assembly protein after formation of the spherical procapsid. By that cleavage, the capsid matures and gains its icosahedral shape. The cleavage sites seem to include -Ala-Ser-, -Ala-Ala-, as well as Ala-Thr bonds. Assemblin and cleavages products are evicted from the capsid before or during DNA packaging.</text>
</comment>
<comment type="function">
    <molecule>Assembly protein</molecule>
    <text evidence="2">Plays a major role in capsid assembly. Acts as a scaffold protein by binding major capsid protein. Multimerizes in the nucleus such as major capsid protein forms the icosahedral T=16 capsid. Cleaved by assemblin after capsid completion. The cleavages products are evicted from the capsid before or during DNA packaging.</text>
</comment>
<comment type="catalytic activity">
    <molecule>Assemblin</molecule>
    <reaction evidence="2 6">
        <text>Cleaves -Ala-|-Ser- and -Ala-|-Ala- bonds in the scaffold protein.</text>
        <dbReference type="EC" id="3.4.21.97"/>
    </reaction>
</comment>
<comment type="subunit">
    <molecule>Capsid scaffolding protein</molecule>
    <text evidence="2">Homomultimer. Interacts with major capsid protein.</text>
</comment>
<comment type="subunit">
    <molecule>Assemblin</molecule>
    <text evidence="2 4 5">Exists in a monomer-dimer equilibrium with the dimer being the active species.</text>
</comment>
<comment type="subunit">
    <molecule>Assembly protein</molecule>
    <text evidence="2">Homomultimer. Interacts with major capsid protein.</text>
</comment>
<comment type="subcellular location">
    <molecule>Capsid scaffolding protein</molecule>
    <subcellularLocation>
        <location evidence="2">Host cytoplasm</location>
    </subcellularLocation>
</comment>
<comment type="subcellular location">
    <molecule>Assemblin</molecule>
    <subcellularLocation>
        <location evidence="2">Host nucleus</location>
    </subcellularLocation>
</comment>
<comment type="subcellular location">
    <molecule>Assembly protein</molecule>
    <subcellularLocation>
        <location evidence="2">Host nucleus</location>
    </subcellularLocation>
</comment>
<comment type="alternative products">
    <event type="alternative promoter"/>
    <isoform>
        <id>Q2HRB6-1</id>
        <name>Capsid scaffolding protein</name>
        <name>pPR</name>
        <sequence type="displayed"/>
    </isoform>
    <isoform>
        <id>Q2HRB6-2</id>
        <name>pAP</name>
        <name>Assembly protein</name>
        <sequence type="described" ref="VSP_053272"/>
    </isoform>
</comment>
<comment type="induction">
    <molecule>Assembly protein</molecule>
    <text evidence="6">Expression is strongly up-regulated upon lytic induction of the virus.</text>
</comment>
<comment type="domain">
    <text evidence="2">Region of interaction between pPR and pAP is called Amino conserved domain (ACD). The region of interaction with major capsid protein is called carboxyl conserved domain (CCD).</text>
</comment>
<comment type="PTM">
    <molecule>Capsid scaffolding protein</molecule>
    <text evidence="2 6">Capsid scaffolding protein is cleaved by assemblin after formation of the spherical procapsid. As a result, the capsid obtains its mature, icosahedral shape. Cleavages occur at two or more sites: release (R-site) and maturation (M-site).</text>
</comment>
<comment type="similarity">
    <text evidence="2">Belongs to the herpesviridae capsid scaffolding protein family.</text>
</comment>
<dbReference type="EC" id="3.4.21.97" evidence="2 6"/>
<dbReference type="EMBL" id="AF010430">
    <property type="protein sequence ID" value="AAC05223.1"/>
    <property type="molecule type" value="Genomic_DNA"/>
</dbReference>
<dbReference type="EMBL" id="AF148805">
    <property type="protein sequence ID" value="ABD28867.1"/>
    <property type="molecule type" value="Genomic_DNA"/>
</dbReference>
<dbReference type="EMBL" id="AF148805">
    <property type="protein sequence ID" value="ABD28868.1"/>
    <property type="molecule type" value="Genomic_DNA"/>
</dbReference>
<dbReference type="RefSeq" id="YP_001129369.1">
    <property type="nucleotide sequence ID" value="NC_009333.1"/>
</dbReference>
<dbReference type="PDB" id="1FL1">
    <property type="method" value="X-ray"/>
    <property type="resolution" value="2.20 A"/>
    <property type="chains" value="A/B=1-230"/>
</dbReference>
<dbReference type="PDB" id="2PBK">
    <property type="method" value="X-ray"/>
    <property type="resolution" value="1.73 A"/>
    <property type="chains" value="A/B=3-230"/>
</dbReference>
<dbReference type="PDB" id="4P2T">
    <property type="method" value="X-ray"/>
    <property type="resolution" value="2.15 A"/>
    <property type="chains" value="A/B=3-196"/>
</dbReference>
<dbReference type="PDB" id="4P3H">
    <property type="method" value="X-ray"/>
    <property type="resolution" value="1.45 A"/>
    <property type="chains" value="A/B=4-196"/>
</dbReference>
<dbReference type="PDBsum" id="1FL1"/>
<dbReference type="PDBsum" id="2PBK"/>
<dbReference type="PDBsum" id="4P2T"/>
<dbReference type="PDBsum" id="4P3H"/>
<dbReference type="SMR" id="Q2HRB6"/>
<dbReference type="BioGRID" id="1776981">
    <property type="interactions" value="5"/>
</dbReference>
<dbReference type="BioGRID" id="1776985">
    <property type="interactions" value="12"/>
</dbReference>
<dbReference type="ChEMBL" id="CHEMBL4296290"/>
<dbReference type="MEROPS" id="S21.006"/>
<dbReference type="DNASU" id="4961478"/>
<dbReference type="GeneID" id="4961478"/>
<dbReference type="KEGG" id="vg:4961478"/>
<dbReference type="KEGG" id="vg:4961482"/>
<dbReference type="EvolutionaryTrace" id="Q2HRB6"/>
<dbReference type="Proteomes" id="UP000000942">
    <property type="component" value="Segment"/>
</dbReference>
<dbReference type="GO" id="GO:0030430">
    <property type="term" value="C:host cell cytoplasm"/>
    <property type="evidence" value="ECO:0007669"/>
    <property type="project" value="UniProtKB-SubCell"/>
</dbReference>
<dbReference type="GO" id="GO:0042025">
    <property type="term" value="C:host cell nucleus"/>
    <property type="evidence" value="ECO:0007669"/>
    <property type="project" value="UniProtKB-SubCell"/>
</dbReference>
<dbReference type="GO" id="GO:0042802">
    <property type="term" value="F:identical protein binding"/>
    <property type="evidence" value="ECO:0007669"/>
    <property type="project" value="UniProtKB-UniRule"/>
</dbReference>
<dbReference type="GO" id="GO:0004252">
    <property type="term" value="F:serine-type endopeptidase activity"/>
    <property type="evidence" value="ECO:0007669"/>
    <property type="project" value="UniProtKB-UniRule"/>
</dbReference>
<dbReference type="GO" id="GO:0039708">
    <property type="term" value="P:nuclear capsid assembly"/>
    <property type="evidence" value="ECO:0007669"/>
    <property type="project" value="UniProtKB-ARBA"/>
</dbReference>
<dbReference type="GO" id="GO:0006508">
    <property type="term" value="P:proteolysis"/>
    <property type="evidence" value="ECO:0007669"/>
    <property type="project" value="UniProtKB-KW"/>
</dbReference>
<dbReference type="GO" id="GO:0019076">
    <property type="term" value="P:viral release from host cell"/>
    <property type="evidence" value="ECO:0007669"/>
    <property type="project" value="UniProtKB-UniRule"/>
</dbReference>
<dbReference type="Gene3D" id="3.20.16.10">
    <property type="entry name" value="Herpesvirus/Caudovirus protease domain"/>
    <property type="match status" value="1"/>
</dbReference>
<dbReference type="HAMAP" id="MF_04008">
    <property type="entry name" value="HSV_SCAF"/>
    <property type="match status" value="1"/>
</dbReference>
<dbReference type="InterPro" id="IPR035443">
    <property type="entry name" value="Herpes_virus_sf"/>
</dbReference>
<dbReference type="InterPro" id="IPR001847">
    <property type="entry name" value="Peptidase_S21"/>
</dbReference>
<dbReference type="Pfam" id="PF00716">
    <property type="entry name" value="Peptidase_S21"/>
    <property type="match status" value="1"/>
</dbReference>
<dbReference type="PRINTS" id="PR00236">
    <property type="entry name" value="HSVCAPSIDP40"/>
</dbReference>
<dbReference type="SUPFAM" id="SSF50789">
    <property type="entry name" value="Herpes virus serine proteinase, assemblin"/>
    <property type="match status" value="1"/>
</dbReference>